<comment type="function">
    <text>Sigma factors are initiation factors that promote the attachment of RNA polymerase to specific initiation sites and are then released. This sigma factor is responsible for the expression of the nitrogen fixation genes.</text>
</comment>
<comment type="similarity">
    <text evidence="3">Belongs to the sigma-54 factor family.</text>
</comment>
<keyword id="KW-0238">DNA-binding</keyword>
<keyword id="KW-0240">DNA-directed RNA polymerase</keyword>
<keyword id="KW-0548">Nucleotidyltransferase</keyword>
<keyword id="KW-1185">Reference proteome</keyword>
<keyword id="KW-0731">Sigma factor</keyword>
<keyword id="KW-0804">Transcription</keyword>
<keyword id="KW-0805">Transcription regulation</keyword>
<keyword id="KW-0808">Transferase</keyword>
<proteinExistence type="inferred from homology"/>
<dbReference type="EMBL" id="X69959">
    <property type="protein sequence ID" value="CAA49582.1"/>
    <property type="molecule type" value="Genomic_DNA"/>
</dbReference>
<dbReference type="EMBL" id="AP009384">
    <property type="protein sequence ID" value="BAF89923.1"/>
    <property type="molecule type" value="Genomic_DNA"/>
</dbReference>
<dbReference type="PIR" id="S33580">
    <property type="entry name" value="S33580"/>
</dbReference>
<dbReference type="RefSeq" id="WP_012172445.1">
    <property type="nucleotide sequence ID" value="NC_009937.1"/>
</dbReference>
<dbReference type="SMR" id="P33984"/>
<dbReference type="STRING" id="438753.AZC_3925"/>
<dbReference type="KEGG" id="azc:AZC_3925"/>
<dbReference type="eggNOG" id="COG1508">
    <property type="taxonomic scope" value="Bacteria"/>
</dbReference>
<dbReference type="HOGENOM" id="CLU_020569_0_0_5"/>
<dbReference type="Proteomes" id="UP000000270">
    <property type="component" value="Chromosome"/>
</dbReference>
<dbReference type="GO" id="GO:0000428">
    <property type="term" value="C:DNA-directed RNA polymerase complex"/>
    <property type="evidence" value="ECO:0007669"/>
    <property type="project" value="UniProtKB-KW"/>
</dbReference>
<dbReference type="GO" id="GO:0003677">
    <property type="term" value="F:DNA binding"/>
    <property type="evidence" value="ECO:0007669"/>
    <property type="project" value="UniProtKB-KW"/>
</dbReference>
<dbReference type="GO" id="GO:0001216">
    <property type="term" value="F:DNA-binding transcription activator activity"/>
    <property type="evidence" value="ECO:0007669"/>
    <property type="project" value="InterPro"/>
</dbReference>
<dbReference type="GO" id="GO:0016779">
    <property type="term" value="F:nucleotidyltransferase activity"/>
    <property type="evidence" value="ECO:0007669"/>
    <property type="project" value="UniProtKB-KW"/>
</dbReference>
<dbReference type="GO" id="GO:0016987">
    <property type="term" value="F:sigma factor activity"/>
    <property type="evidence" value="ECO:0007669"/>
    <property type="project" value="UniProtKB-KW"/>
</dbReference>
<dbReference type="GO" id="GO:0006352">
    <property type="term" value="P:DNA-templated transcription initiation"/>
    <property type="evidence" value="ECO:0007669"/>
    <property type="project" value="InterPro"/>
</dbReference>
<dbReference type="Gene3D" id="1.10.10.60">
    <property type="entry name" value="Homeodomain-like"/>
    <property type="match status" value="1"/>
</dbReference>
<dbReference type="Gene3D" id="1.10.10.1330">
    <property type="entry name" value="RNA polymerase sigma-54 factor, core-binding domain"/>
    <property type="match status" value="1"/>
</dbReference>
<dbReference type="InterPro" id="IPR000394">
    <property type="entry name" value="RNA_pol_sigma_54"/>
</dbReference>
<dbReference type="InterPro" id="IPR007046">
    <property type="entry name" value="RNA_pol_sigma_54_core-bd"/>
</dbReference>
<dbReference type="InterPro" id="IPR007634">
    <property type="entry name" value="RNA_pol_sigma_54_DNA-bd"/>
</dbReference>
<dbReference type="InterPro" id="IPR038709">
    <property type="entry name" value="RpoN_core-bd_sf"/>
</dbReference>
<dbReference type="NCBIfam" id="NF004596">
    <property type="entry name" value="PRK05932.1-3"/>
    <property type="match status" value="1"/>
</dbReference>
<dbReference type="NCBIfam" id="NF009118">
    <property type="entry name" value="PRK12469.1"/>
    <property type="match status" value="1"/>
</dbReference>
<dbReference type="NCBIfam" id="TIGR02395">
    <property type="entry name" value="rpoN_sigma"/>
    <property type="match status" value="1"/>
</dbReference>
<dbReference type="PANTHER" id="PTHR32248">
    <property type="entry name" value="RNA POLYMERASE SIGMA-54 FACTOR"/>
    <property type="match status" value="1"/>
</dbReference>
<dbReference type="PANTHER" id="PTHR32248:SF4">
    <property type="entry name" value="RNA POLYMERASE SIGMA-54 FACTOR"/>
    <property type="match status" value="1"/>
</dbReference>
<dbReference type="Pfam" id="PF00309">
    <property type="entry name" value="Sigma54_AID"/>
    <property type="match status" value="1"/>
</dbReference>
<dbReference type="Pfam" id="PF04963">
    <property type="entry name" value="Sigma54_CBD"/>
    <property type="match status" value="1"/>
</dbReference>
<dbReference type="Pfam" id="PF04552">
    <property type="entry name" value="Sigma54_DBD"/>
    <property type="match status" value="1"/>
</dbReference>
<dbReference type="PIRSF" id="PIRSF000774">
    <property type="entry name" value="RpoN"/>
    <property type="match status" value="1"/>
</dbReference>
<dbReference type="PRINTS" id="PR00045">
    <property type="entry name" value="SIGMA54FCT"/>
</dbReference>
<dbReference type="PROSITE" id="PS00717">
    <property type="entry name" value="SIGMA54_1"/>
    <property type="match status" value="1"/>
</dbReference>
<dbReference type="PROSITE" id="PS00718">
    <property type="entry name" value="SIGMA54_2"/>
    <property type="match status" value="1"/>
</dbReference>
<dbReference type="PROSITE" id="PS50044">
    <property type="entry name" value="SIGMA54_3"/>
    <property type="match status" value="1"/>
</dbReference>
<gene>
    <name type="primary">rpoN</name>
    <name type="synonym">ntrA</name>
    <name type="ordered locus">AZC_3925</name>
</gene>
<name>RP54_AZOC5</name>
<protein>
    <recommendedName>
        <fullName>RNA polymerase sigma-54 factor</fullName>
    </recommendedName>
</protein>
<organism>
    <name type="scientific">Azorhizobium caulinodans (strain ATCC 43989 / DSM 5975 / JCM 20966 / LMG 6465 / NBRC 14845 / NCIMB 13405 / ORS 571)</name>
    <dbReference type="NCBI Taxonomy" id="438753"/>
    <lineage>
        <taxon>Bacteria</taxon>
        <taxon>Pseudomonadati</taxon>
        <taxon>Pseudomonadota</taxon>
        <taxon>Alphaproteobacteria</taxon>
        <taxon>Hyphomicrobiales</taxon>
        <taxon>Xanthobacteraceae</taxon>
        <taxon>Azorhizobium</taxon>
    </lineage>
</organism>
<feature type="chain" id="PRO_0000205522" description="RNA polymerase sigma-54 factor">
    <location>
        <begin position="1"/>
        <end position="514"/>
    </location>
</feature>
<feature type="DNA-binding region" description="H-T-H motif" evidence="1">
    <location>
        <begin position="391"/>
        <end position="410"/>
    </location>
</feature>
<feature type="region of interest" description="Disordered" evidence="2">
    <location>
        <begin position="52"/>
        <end position="91"/>
    </location>
</feature>
<feature type="region of interest" description="Disordered" evidence="2">
    <location>
        <begin position="114"/>
        <end position="133"/>
    </location>
</feature>
<feature type="region of interest" description="Disordered" evidence="2">
    <location>
        <begin position="493"/>
        <end position="514"/>
    </location>
</feature>
<feature type="short sequence motif" description="RPON box">
    <location>
        <begin position="480"/>
        <end position="488"/>
    </location>
</feature>
<feature type="compositionally biased region" description="Basic and acidic residues" evidence="2">
    <location>
        <begin position="52"/>
        <end position="62"/>
    </location>
</feature>
<feature type="sequence conflict" description="In Ref. 1; CAA49582." evidence="3" ref="1">
    <original>H</original>
    <variation>L</variation>
    <location>
        <position position="60"/>
    </location>
</feature>
<sequence>MAMSPKMEFRQSQSLVMTPQLMQAIKLLQLSNLELVAYVEAELERNPLLERASEPESPEHDPPNPQEEAPTPPDSGAPVSGDWMESDMGSSREAIETRLDTDLGNVFPDDAPAERIGAGSGSGSSIEWGSGGDRGEDYNPEAFLAAETTLADHLEAQLSVAEPDPARRLIGLNLIGLIDETGYFSGDLDAVAEQLGATHDQVADVLRVIQSFEPSGVGARSLSECLALQLRDKDRCDPAMQALLDNLELLARHDRNALKRICGVDAEDLADMIGEIRRLDPKPGLAYGGGVVHPLVPDVFVREGSDGSWIVELNSETLPRVLVNQTYHATVAKAARSAEEKTFLADCLQSASWLTRSLDQRARTILKVASEIVRQQDAFLVHGVRHLRPLNLRTVADAIGMHESTVSRVTSNKYISTPRGVLEMKFFFSSSIASSGGGEAHAAEAVRHRIKSLIEAESADDVLSDDTLVQKLKDDGIDIARRTVAKYRESMNIPSSVQRRREKQALRSDAAAAG</sequence>
<accession>P33984</accession>
<accession>A8IKL6</accession>
<reference key="1">
    <citation type="journal article" date="1993" name="Mol. Plant Microbe Interact.">
        <title>Azorhizobium caulinodans nitrogen fixation (nif/fix) gene regulation: mutagenesis of the nifA -24/-12 promoter element, characterization of a ntrA(rpoN) gene, and derivation of a model.</title>
        <authorList>
            <person name="Stigter J."/>
            <person name="Schneider M."/>
            <person name="de Bruijn F.J."/>
        </authorList>
    </citation>
    <scope>NUCLEOTIDE SEQUENCE [GENOMIC DNA]</scope>
</reference>
<reference key="2">
    <citation type="submission" date="2007-04" db="EMBL/GenBank/DDBJ databases">
        <title>Complete genome sequence of the nitrogen-fixing bacterium Azorhizobium caulinodans ORS571.</title>
        <authorList>
            <person name="Lee K.B."/>
            <person name="Backer P.D."/>
            <person name="Aono T."/>
            <person name="Liu C.T."/>
            <person name="Suzuki S."/>
            <person name="Suzuki T."/>
            <person name="Kaneko T."/>
            <person name="Yamada M."/>
            <person name="Tabata S."/>
            <person name="Kupfer D.M."/>
            <person name="Najar F.Z."/>
            <person name="Wiley G.B."/>
            <person name="Roe B."/>
            <person name="Binnewies T."/>
            <person name="Ussery D."/>
            <person name="Vereecke D."/>
            <person name="Gevers D."/>
            <person name="Holsters M."/>
            <person name="Oyaizu H."/>
        </authorList>
    </citation>
    <scope>NUCLEOTIDE SEQUENCE [LARGE SCALE GENOMIC DNA]</scope>
    <source>
        <strain>ATCC 43989 / DSM 5975 / JCM 20966 / LMG 6465 / NBRC 14845 / NCIMB 13405 / ORS 571</strain>
    </source>
</reference>
<evidence type="ECO:0000255" key="1"/>
<evidence type="ECO:0000256" key="2">
    <source>
        <dbReference type="SAM" id="MobiDB-lite"/>
    </source>
</evidence>
<evidence type="ECO:0000305" key="3"/>